<organism>
    <name type="scientific">Rhizorhabdus wittichii (strain DSM 6014 / CCUG 31198 / JCM 15750 / NBRC 105917 / EY 4224 / RW1)</name>
    <name type="common">Sphingomonas wittichii</name>
    <dbReference type="NCBI Taxonomy" id="392499"/>
    <lineage>
        <taxon>Bacteria</taxon>
        <taxon>Pseudomonadati</taxon>
        <taxon>Pseudomonadota</taxon>
        <taxon>Alphaproteobacteria</taxon>
        <taxon>Sphingomonadales</taxon>
        <taxon>Sphingomonadaceae</taxon>
        <taxon>Rhizorhabdus</taxon>
    </lineage>
</organism>
<feature type="chain" id="PRO_1000053344" description="ATP synthase gamma chain">
    <location>
        <begin position="1"/>
        <end position="294"/>
    </location>
</feature>
<name>ATPG_RHIWR</name>
<protein>
    <recommendedName>
        <fullName evidence="1">ATP synthase gamma chain</fullName>
    </recommendedName>
    <alternativeName>
        <fullName evidence="1">ATP synthase F1 sector gamma subunit</fullName>
    </alternativeName>
    <alternativeName>
        <fullName evidence="1">F-ATPase gamma subunit</fullName>
    </alternativeName>
</protein>
<gene>
    <name evidence="1" type="primary">atpG</name>
    <name type="ordered locus">Swit_0622</name>
</gene>
<proteinExistence type="inferred from homology"/>
<reference key="1">
    <citation type="journal article" date="2010" name="J. Bacteriol.">
        <title>Genome sequence of the dioxin-mineralizing bacterium Sphingomonas wittichii RW1.</title>
        <authorList>
            <person name="Miller T.R."/>
            <person name="Delcher A.L."/>
            <person name="Salzberg S.L."/>
            <person name="Saunders E."/>
            <person name="Detter J.C."/>
            <person name="Halden R.U."/>
        </authorList>
    </citation>
    <scope>NUCLEOTIDE SEQUENCE [LARGE SCALE GENOMIC DNA]</scope>
    <source>
        <strain>DSM 6014 / CCUG 31198 / JCM 15750 / NBRC 105917 / EY 4224 / RW1</strain>
    </source>
</reference>
<sequence>MASLKALKVRITSVKSTQKITKAMKMVAAAKLRRAQMAAEAGRPYAERLDAVMSSLASKVTVGPQSPKLLAGTGNDQVHLLVVATSERGLAGAFNTNIVRAARKTADSLIAQGKTVKFYLIGKKGRAVLQRLFPGKIVHQVDQSHIKNVAFSDAHMVAEDLIGRYSAGEFDVAHLFFAKFQSALVQEPTELQIIPVPLTADTGAAATGASAAVEYEPDEEAILTELLPRNVAVQLFRAMLENAASEQGSRMTAMDNATRNAGEMINKLTIQYNRTRQAAITTELIEIIAGAEAL</sequence>
<accession>A5V3X4</accession>
<evidence type="ECO:0000255" key="1">
    <source>
        <dbReference type="HAMAP-Rule" id="MF_00815"/>
    </source>
</evidence>
<keyword id="KW-0066">ATP synthesis</keyword>
<keyword id="KW-0997">Cell inner membrane</keyword>
<keyword id="KW-1003">Cell membrane</keyword>
<keyword id="KW-0139">CF(1)</keyword>
<keyword id="KW-0375">Hydrogen ion transport</keyword>
<keyword id="KW-0406">Ion transport</keyword>
<keyword id="KW-0472">Membrane</keyword>
<keyword id="KW-1185">Reference proteome</keyword>
<keyword id="KW-0813">Transport</keyword>
<dbReference type="EMBL" id="CP000699">
    <property type="protein sequence ID" value="ABQ66990.1"/>
    <property type="molecule type" value="Genomic_DNA"/>
</dbReference>
<dbReference type="SMR" id="A5V3X4"/>
<dbReference type="STRING" id="392499.Swit_0622"/>
<dbReference type="PaxDb" id="392499-Swit_0622"/>
<dbReference type="KEGG" id="swi:Swit_0622"/>
<dbReference type="eggNOG" id="COG0224">
    <property type="taxonomic scope" value="Bacteria"/>
</dbReference>
<dbReference type="HOGENOM" id="CLU_050669_0_1_5"/>
<dbReference type="OrthoDB" id="9812769at2"/>
<dbReference type="Proteomes" id="UP000001989">
    <property type="component" value="Chromosome"/>
</dbReference>
<dbReference type="GO" id="GO:0005886">
    <property type="term" value="C:plasma membrane"/>
    <property type="evidence" value="ECO:0007669"/>
    <property type="project" value="UniProtKB-SubCell"/>
</dbReference>
<dbReference type="GO" id="GO:0045259">
    <property type="term" value="C:proton-transporting ATP synthase complex"/>
    <property type="evidence" value="ECO:0007669"/>
    <property type="project" value="UniProtKB-KW"/>
</dbReference>
<dbReference type="GO" id="GO:0005524">
    <property type="term" value="F:ATP binding"/>
    <property type="evidence" value="ECO:0007669"/>
    <property type="project" value="UniProtKB-UniRule"/>
</dbReference>
<dbReference type="GO" id="GO:0046933">
    <property type="term" value="F:proton-transporting ATP synthase activity, rotational mechanism"/>
    <property type="evidence" value="ECO:0007669"/>
    <property type="project" value="UniProtKB-UniRule"/>
</dbReference>
<dbReference type="GO" id="GO:0042777">
    <property type="term" value="P:proton motive force-driven plasma membrane ATP synthesis"/>
    <property type="evidence" value="ECO:0007669"/>
    <property type="project" value="UniProtKB-UniRule"/>
</dbReference>
<dbReference type="CDD" id="cd12151">
    <property type="entry name" value="F1-ATPase_gamma"/>
    <property type="match status" value="1"/>
</dbReference>
<dbReference type="FunFam" id="1.10.287.80:FF:000001">
    <property type="entry name" value="ATP synthase gamma chain"/>
    <property type="match status" value="1"/>
</dbReference>
<dbReference type="Gene3D" id="3.40.1380.10">
    <property type="match status" value="1"/>
</dbReference>
<dbReference type="Gene3D" id="1.10.287.80">
    <property type="entry name" value="ATP synthase, gamma subunit, helix hairpin domain"/>
    <property type="match status" value="1"/>
</dbReference>
<dbReference type="HAMAP" id="MF_00815">
    <property type="entry name" value="ATP_synth_gamma_bact"/>
    <property type="match status" value="1"/>
</dbReference>
<dbReference type="InterPro" id="IPR035968">
    <property type="entry name" value="ATP_synth_F1_ATPase_gsu"/>
</dbReference>
<dbReference type="InterPro" id="IPR000131">
    <property type="entry name" value="ATP_synth_F1_gsu"/>
</dbReference>
<dbReference type="InterPro" id="IPR023632">
    <property type="entry name" value="ATP_synth_F1_gsu_CS"/>
</dbReference>
<dbReference type="NCBIfam" id="TIGR01146">
    <property type="entry name" value="ATPsyn_F1gamma"/>
    <property type="match status" value="1"/>
</dbReference>
<dbReference type="NCBIfam" id="NF004146">
    <property type="entry name" value="PRK05621.1-4"/>
    <property type="match status" value="1"/>
</dbReference>
<dbReference type="PANTHER" id="PTHR11693">
    <property type="entry name" value="ATP SYNTHASE GAMMA CHAIN"/>
    <property type="match status" value="1"/>
</dbReference>
<dbReference type="PANTHER" id="PTHR11693:SF22">
    <property type="entry name" value="ATP SYNTHASE SUBUNIT GAMMA, MITOCHONDRIAL"/>
    <property type="match status" value="1"/>
</dbReference>
<dbReference type="Pfam" id="PF00231">
    <property type="entry name" value="ATP-synt"/>
    <property type="match status" value="1"/>
</dbReference>
<dbReference type="PIRSF" id="PIRSF039089">
    <property type="entry name" value="ATP_synthase_gamma"/>
    <property type="match status" value="1"/>
</dbReference>
<dbReference type="PRINTS" id="PR00126">
    <property type="entry name" value="ATPASEGAMMA"/>
</dbReference>
<dbReference type="SUPFAM" id="SSF52943">
    <property type="entry name" value="ATP synthase (F1-ATPase), gamma subunit"/>
    <property type="match status" value="1"/>
</dbReference>
<dbReference type="PROSITE" id="PS00153">
    <property type="entry name" value="ATPASE_GAMMA"/>
    <property type="match status" value="1"/>
</dbReference>
<comment type="function">
    <text evidence="1">Produces ATP from ADP in the presence of a proton gradient across the membrane. The gamma chain is believed to be important in regulating ATPase activity and the flow of protons through the CF(0) complex.</text>
</comment>
<comment type="subunit">
    <text evidence="1">F-type ATPases have 2 components, CF(1) - the catalytic core - and CF(0) - the membrane proton channel. CF(1) has five subunits: alpha(3), beta(3), gamma(1), delta(1), epsilon(1). CF(0) has three main subunits: a, b and c.</text>
</comment>
<comment type="subcellular location">
    <subcellularLocation>
        <location evidence="1">Cell inner membrane</location>
        <topology evidence="1">Peripheral membrane protein</topology>
    </subcellularLocation>
</comment>
<comment type="similarity">
    <text evidence="1">Belongs to the ATPase gamma chain family.</text>
</comment>